<gene>
    <name type="primary">usp47</name>
</gene>
<keyword id="KW-0963">Cytoplasm</keyword>
<keyword id="KW-0227">DNA damage</keyword>
<keyword id="KW-0234">DNA repair</keyword>
<keyword id="KW-0378">Hydrolase</keyword>
<keyword id="KW-0645">Protease</keyword>
<keyword id="KW-1185">Reference proteome</keyword>
<keyword id="KW-0788">Thiol protease</keyword>
<keyword id="KW-0833">Ubl conjugation pathway</keyword>
<proteinExistence type="evidence at transcript level"/>
<reference key="1">
    <citation type="submission" date="2006-12" db="EMBL/GenBank/DDBJ databases">
        <authorList>
            <consortium name="NIH - Xenopus Gene Collection (XGC) project"/>
        </authorList>
    </citation>
    <scope>NUCLEOTIDE SEQUENCE [LARGE SCALE MRNA]</scope>
    <source>
        <tissue>Testis</tissue>
    </source>
</reference>
<organism>
    <name type="scientific">Xenopus tropicalis</name>
    <name type="common">Western clawed frog</name>
    <name type="synonym">Silurana tropicalis</name>
    <dbReference type="NCBI Taxonomy" id="8364"/>
    <lineage>
        <taxon>Eukaryota</taxon>
        <taxon>Metazoa</taxon>
        <taxon>Chordata</taxon>
        <taxon>Craniata</taxon>
        <taxon>Vertebrata</taxon>
        <taxon>Euteleostomi</taxon>
        <taxon>Amphibia</taxon>
        <taxon>Batrachia</taxon>
        <taxon>Anura</taxon>
        <taxon>Pipoidea</taxon>
        <taxon>Pipidae</taxon>
        <taxon>Xenopodinae</taxon>
        <taxon>Xenopus</taxon>
        <taxon>Silurana</taxon>
    </lineage>
</organism>
<protein>
    <recommendedName>
        <fullName>Ubiquitin carboxyl-terminal hydrolase 47</fullName>
        <ecNumber>3.4.19.12</ecNumber>
    </recommendedName>
    <alternativeName>
        <fullName>Deubiquitinating enzyme 47</fullName>
    </alternativeName>
    <alternativeName>
        <fullName>Ubiquitin thioesterase 47</fullName>
    </alternativeName>
    <alternativeName>
        <fullName>Ubiquitin-specific-processing protease 47</fullName>
    </alternativeName>
</protein>
<accession>A1A5G2</accession>
<comment type="function">
    <text evidence="1">Ubiquitin-specific protease that specifically deubiquitinates monoubiquitinated DNA polymerase beta (polb), stabilizing polb thereby playing a role in base-excision repair (BER).</text>
</comment>
<comment type="catalytic activity">
    <reaction>
        <text>Thiol-dependent hydrolysis of ester, thioester, amide, peptide and isopeptide bonds formed by the C-terminal Gly of ubiquitin (a 76-residue protein attached to proteins as an intracellular targeting signal).</text>
        <dbReference type="EC" id="3.4.19.12"/>
    </reaction>
</comment>
<comment type="subcellular location">
    <subcellularLocation>
        <location evidence="1">Cytoplasm</location>
    </subcellularLocation>
</comment>
<comment type="similarity">
    <text evidence="5">Belongs to the peptidase C19 family. USP47 subfamily.</text>
</comment>
<feature type="chain" id="PRO_0000408359" description="Ubiquitin carboxyl-terminal hydrolase 47">
    <location>
        <begin position="1"/>
        <end position="1354"/>
    </location>
</feature>
<feature type="domain" description="USP">
    <location>
        <begin position="174"/>
        <end position="549"/>
    </location>
</feature>
<feature type="region of interest" description="Disordered" evidence="4">
    <location>
        <begin position="114"/>
        <end position="139"/>
    </location>
</feature>
<feature type="region of interest" description="Disordered" evidence="4">
    <location>
        <begin position="408"/>
        <end position="438"/>
    </location>
</feature>
<feature type="region of interest" description="Disordered" evidence="4">
    <location>
        <begin position="863"/>
        <end position="1004"/>
    </location>
</feature>
<feature type="region of interest" description="Disordered" evidence="4">
    <location>
        <begin position="1314"/>
        <end position="1335"/>
    </location>
</feature>
<feature type="compositionally biased region" description="Polar residues" evidence="4">
    <location>
        <begin position="114"/>
        <end position="133"/>
    </location>
</feature>
<feature type="compositionally biased region" description="Polar residues" evidence="4">
    <location>
        <begin position="416"/>
        <end position="438"/>
    </location>
</feature>
<feature type="compositionally biased region" description="Polar residues" evidence="4">
    <location>
        <begin position="863"/>
        <end position="882"/>
    </location>
</feature>
<feature type="compositionally biased region" description="Basic and acidic residues" evidence="4">
    <location>
        <begin position="920"/>
        <end position="930"/>
    </location>
</feature>
<feature type="compositionally biased region" description="Low complexity" evidence="4">
    <location>
        <begin position="933"/>
        <end position="949"/>
    </location>
</feature>
<feature type="compositionally biased region" description="Basic and acidic residues" evidence="4">
    <location>
        <begin position="977"/>
        <end position="986"/>
    </location>
</feature>
<feature type="compositionally biased region" description="Acidic residues" evidence="4">
    <location>
        <begin position="987"/>
        <end position="1000"/>
    </location>
</feature>
<feature type="active site" description="Nucleophile" evidence="2 3">
    <location>
        <position position="183"/>
    </location>
</feature>
<feature type="active site" description="Proton acceptor" evidence="2 3">
    <location>
        <position position="488"/>
    </location>
</feature>
<name>UBP47_XENTR</name>
<sequence length="1354" mass="153719">MRPGEESHLVPKEIENAADEPRVLCIVQDTTSCKNINERITLNLPASTSVKQLYEDVSSKAGYVSGTFSLMWGNGASNMVDMAALDPTPDRTLQEAGFEAGKKNFLHLTDKNGEQPQLASDESGTADSSGLDDSTQEKFIGPLPREESVACTSDYVSQNYSYSSLLSKSDTGYVGLVNQAMTCYLNSLLQTLFMTPEFRNALYKWEFEESEEDPVSSIPYQLQRLFVLLQTSKKRAIETTDVTRSFGWDSSEAWQQHDVQELCRVMFDALEQKWKQTEQADLINQLYQGKLKDYVKCLECGYESWRIDTFLDIPLVIRPFGSNTAFGSMEEALQAFIQPETLDGPNQYFCERCKRKCDARKGLKFLHFPYLLTLQLKRFDFDYTSMHRIKLNDRMTFPDELDMSPFIDVEDEKSPQTDSCTDSGAENEGSCHSDQMSNDFSTDDAVDEGICLETNSNIEKLNKSVSEKNSLYELFSVMVHSGSAAGGHYYACIKSFADGQWYSFNDQHVSRITQEDIKKTYGGSTGNRGYYSSAFASSTNAYMLMYRLKNPARNAKFPEAIEFPEHIKLLVQKEQEQEEQEKRQREIERNTCKLKLFCMHPVKQIMMESKLEVHKDKTMKEAVEIAHKLMDLEGVISLDCCRLVKYDEFHDYLERSYEDEEDRTMGYLLGGVKSSYMFDLLLETKRSDQVFQSYKPGEVMVKVYVVDLKTETVAPPVSVRAYLSQTIIEFKQLISKSVDLLPDTMRVVLERCYNDLRLLNVANKTLKAEGFFRSNKVFVESSDSLDYQLVFTDSHLWKLLDRHANTIRLYVSLPEHTPQTARSVGPKGGGDSNLSEDYCSRVKGNVKSVDAILEESTEKLKSLSLQQHQDGGNGDSSKSTEGSDFENIDSPLNEADSGSADNRELENRILPADPENNFQPEERSDSDVNNDRSTSSVDSDILSSSHSSDTLCNADSAPIPLANGLDSHSITSSRRSKANDGKKETWDTAEEDSGTDSEYDESGKSRGEAQYMYFKAEPHAGEGCLGEGNKCLLVSVDKRITLAAFKQQLESFVGVSSSQFKVFRVYASNQEFESVRLNETLSSFSDDNKITIRLGRALKKGEYRVKIFQLLVNEPEPCKFLLDAVFSKGMTVRQSKEELLPLLRDQCGLDLSIDRFRLRKKTWKNPGTVFLDYHVYENESISSSWEVFLEALDETEKMKSMSQLSLFTKRWRPSELKLDPFKEIVMESNSVDELRDKICDISAIPLENLEFAKGRGTFPCDISVLEIHQDLDWNPKVSTLNAWPLYISDDGAVIFYRDKMEELVELTDEQRNDLAKKESSRLQKTGHRVTYSPRKEKALKIYLDGPSNKDSSQD</sequence>
<dbReference type="EC" id="3.4.19.12"/>
<dbReference type="EMBL" id="BC128636">
    <property type="protein sequence ID" value="AAI28637.1"/>
    <property type="molecule type" value="mRNA"/>
</dbReference>
<dbReference type="RefSeq" id="NP_001090710.1">
    <property type="nucleotide sequence ID" value="NM_001097241.1"/>
</dbReference>
<dbReference type="SMR" id="A1A5G2"/>
<dbReference type="FunCoup" id="A1A5G2">
    <property type="interactions" value="3892"/>
</dbReference>
<dbReference type="STRING" id="8364.ENSXETP00000048966"/>
<dbReference type="MEROPS" id="C19.055"/>
<dbReference type="PaxDb" id="8364-ENSXETP00000029972"/>
<dbReference type="GeneID" id="100036690"/>
<dbReference type="KEGG" id="xtr:100036690"/>
<dbReference type="AGR" id="Xenbase:XB-GENE-5760041"/>
<dbReference type="CTD" id="55031"/>
<dbReference type="Xenbase" id="XB-GENE-5760041">
    <property type="gene designation" value="usp47"/>
</dbReference>
<dbReference type="eggNOG" id="KOG4598">
    <property type="taxonomic scope" value="Eukaryota"/>
</dbReference>
<dbReference type="InParanoid" id="A1A5G2"/>
<dbReference type="OrthoDB" id="289038at2759"/>
<dbReference type="Reactome" id="R-XTR-5689880">
    <property type="pathway name" value="Ub-specific processing proteases"/>
</dbReference>
<dbReference type="Proteomes" id="UP000008143">
    <property type="component" value="Chromosome 4"/>
</dbReference>
<dbReference type="GO" id="GO:0005737">
    <property type="term" value="C:cytoplasm"/>
    <property type="evidence" value="ECO:0000250"/>
    <property type="project" value="UniProtKB"/>
</dbReference>
<dbReference type="GO" id="GO:0004843">
    <property type="term" value="F:cysteine-type deubiquitinase activity"/>
    <property type="evidence" value="ECO:0000250"/>
    <property type="project" value="UniProtKB"/>
</dbReference>
<dbReference type="GO" id="GO:0006284">
    <property type="term" value="P:base-excision repair"/>
    <property type="evidence" value="ECO:0000250"/>
    <property type="project" value="UniProtKB"/>
</dbReference>
<dbReference type="GO" id="GO:0006974">
    <property type="term" value="P:DNA damage response"/>
    <property type="evidence" value="ECO:0000250"/>
    <property type="project" value="UniProtKB"/>
</dbReference>
<dbReference type="GO" id="GO:0035520">
    <property type="term" value="P:monoubiquitinated protein deubiquitination"/>
    <property type="evidence" value="ECO:0000250"/>
    <property type="project" value="UniProtKB"/>
</dbReference>
<dbReference type="GO" id="GO:0006508">
    <property type="term" value="P:proteolysis"/>
    <property type="evidence" value="ECO:0007669"/>
    <property type="project" value="UniProtKB-KW"/>
</dbReference>
<dbReference type="CDD" id="cd02659">
    <property type="entry name" value="peptidase_C19C"/>
    <property type="match status" value="1"/>
</dbReference>
<dbReference type="Gene3D" id="3.90.70.10">
    <property type="entry name" value="Cysteine proteinases"/>
    <property type="match status" value="1"/>
</dbReference>
<dbReference type="InterPro" id="IPR038765">
    <property type="entry name" value="Papain-like_cys_pep_sf"/>
</dbReference>
<dbReference type="InterPro" id="IPR050164">
    <property type="entry name" value="Peptidase_C19"/>
</dbReference>
<dbReference type="InterPro" id="IPR001394">
    <property type="entry name" value="Peptidase_C19_UCH"/>
</dbReference>
<dbReference type="InterPro" id="IPR045578">
    <property type="entry name" value="USP47_C"/>
</dbReference>
<dbReference type="InterPro" id="IPR018200">
    <property type="entry name" value="USP_CS"/>
</dbReference>
<dbReference type="InterPro" id="IPR028889">
    <property type="entry name" value="USP_dom"/>
</dbReference>
<dbReference type="PANTHER" id="PTHR24006">
    <property type="entry name" value="UBIQUITIN CARBOXYL-TERMINAL HYDROLASE"/>
    <property type="match status" value="1"/>
</dbReference>
<dbReference type="PANTHER" id="PTHR24006:SF702">
    <property type="entry name" value="UBIQUITIN CARBOXYL-TERMINAL HYDROLASE 47"/>
    <property type="match status" value="1"/>
</dbReference>
<dbReference type="Pfam" id="PF00443">
    <property type="entry name" value="UCH"/>
    <property type="match status" value="1"/>
</dbReference>
<dbReference type="Pfam" id="PF19718">
    <property type="entry name" value="USP47_C"/>
    <property type="match status" value="1"/>
</dbReference>
<dbReference type="SUPFAM" id="SSF54001">
    <property type="entry name" value="Cysteine proteinases"/>
    <property type="match status" value="1"/>
</dbReference>
<dbReference type="PROSITE" id="PS00972">
    <property type="entry name" value="USP_1"/>
    <property type="match status" value="1"/>
</dbReference>
<dbReference type="PROSITE" id="PS00973">
    <property type="entry name" value="USP_2"/>
    <property type="match status" value="1"/>
</dbReference>
<dbReference type="PROSITE" id="PS50235">
    <property type="entry name" value="USP_3"/>
    <property type="match status" value="1"/>
</dbReference>
<evidence type="ECO:0000250" key="1"/>
<evidence type="ECO:0000255" key="2">
    <source>
        <dbReference type="PROSITE-ProRule" id="PRU10092"/>
    </source>
</evidence>
<evidence type="ECO:0000255" key="3">
    <source>
        <dbReference type="PROSITE-ProRule" id="PRU10093"/>
    </source>
</evidence>
<evidence type="ECO:0000256" key="4">
    <source>
        <dbReference type="SAM" id="MobiDB-lite"/>
    </source>
</evidence>
<evidence type="ECO:0000305" key="5"/>